<name>YAWC_SCHPO</name>
<dbReference type="EMBL" id="CU329670">
    <property type="protein sequence ID" value="CAA93310.1"/>
    <property type="molecule type" value="Genomic_DNA"/>
</dbReference>
<dbReference type="PIR" id="T38713">
    <property type="entry name" value="T38713"/>
</dbReference>
<dbReference type="RefSeq" id="NP_593944.1">
    <property type="nucleotide sequence ID" value="NM_001019372.2"/>
</dbReference>
<dbReference type="SMR" id="Q10186"/>
<dbReference type="BioGRID" id="279588">
    <property type="interactions" value="44"/>
</dbReference>
<dbReference type="FunCoup" id="Q10186">
    <property type="interactions" value="280"/>
</dbReference>
<dbReference type="STRING" id="284812.Q10186"/>
<dbReference type="iPTMnet" id="Q10186"/>
<dbReference type="PaxDb" id="4896-SPAC3F10.12c.1"/>
<dbReference type="EnsemblFungi" id="SPAC3F10.12c.1">
    <property type="protein sequence ID" value="SPAC3F10.12c.1:pep"/>
    <property type="gene ID" value="SPAC3F10.12c"/>
</dbReference>
<dbReference type="KEGG" id="spo:2543157"/>
<dbReference type="PomBase" id="SPAC3F10.12c"/>
<dbReference type="VEuPathDB" id="FungiDB:SPAC3F10.12c"/>
<dbReference type="eggNOG" id="KOG1318">
    <property type="taxonomic scope" value="Eukaryota"/>
</dbReference>
<dbReference type="HOGENOM" id="CLU_1361119_0_0_1"/>
<dbReference type="InParanoid" id="Q10186"/>
<dbReference type="PhylomeDB" id="Q10186"/>
<dbReference type="PRO" id="PR:Q10186"/>
<dbReference type="Proteomes" id="UP000002485">
    <property type="component" value="Chromosome I"/>
</dbReference>
<dbReference type="GO" id="GO:0005634">
    <property type="term" value="C:nucleus"/>
    <property type="evidence" value="ECO:0007005"/>
    <property type="project" value="PomBase"/>
</dbReference>
<dbReference type="GO" id="GO:0003700">
    <property type="term" value="F:DNA-binding transcription factor activity"/>
    <property type="evidence" value="ECO:0000318"/>
    <property type="project" value="GO_Central"/>
</dbReference>
<dbReference type="GO" id="GO:0000981">
    <property type="term" value="F:DNA-binding transcription factor activity, RNA polymerase II-specific"/>
    <property type="evidence" value="ECO:0000266"/>
    <property type="project" value="PomBase"/>
</dbReference>
<dbReference type="GO" id="GO:0046983">
    <property type="term" value="F:protein dimerization activity"/>
    <property type="evidence" value="ECO:0007669"/>
    <property type="project" value="InterPro"/>
</dbReference>
<dbReference type="GO" id="GO:0000978">
    <property type="term" value="F:RNA polymerase II cis-regulatory region sequence-specific DNA binding"/>
    <property type="evidence" value="ECO:0000266"/>
    <property type="project" value="PomBase"/>
</dbReference>
<dbReference type="GO" id="GO:0006357">
    <property type="term" value="P:regulation of transcription by RNA polymerase II"/>
    <property type="evidence" value="ECO:0000266"/>
    <property type="project" value="PomBase"/>
</dbReference>
<dbReference type="CDD" id="cd11398">
    <property type="entry name" value="bHLHzip_scCBP1"/>
    <property type="match status" value="1"/>
</dbReference>
<dbReference type="Gene3D" id="4.10.280.10">
    <property type="entry name" value="Helix-loop-helix DNA-binding domain"/>
    <property type="match status" value="1"/>
</dbReference>
<dbReference type="InterPro" id="IPR011598">
    <property type="entry name" value="bHLH_dom"/>
</dbReference>
<dbReference type="InterPro" id="IPR047206">
    <property type="entry name" value="bHLHzip_scCBP1-like"/>
</dbReference>
<dbReference type="InterPro" id="IPR036638">
    <property type="entry name" value="HLH_DNA-bd_sf"/>
</dbReference>
<dbReference type="PANTHER" id="PTHR47787">
    <property type="entry name" value="CENTROMERE-BINDING PROTEIN 1"/>
    <property type="match status" value="1"/>
</dbReference>
<dbReference type="PANTHER" id="PTHR47787:SF1">
    <property type="entry name" value="CENTROMERE-BINDING PROTEIN 1"/>
    <property type="match status" value="1"/>
</dbReference>
<dbReference type="Pfam" id="PF00010">
    <property type="entry name" value="HLH"/>
    <property type="match status" value="1"/>
</dbReference>
<dbReference type="SMART" id="SM00353">
    <property type="entry name" value="HLH"/>
    <property type="match status" value="1"/>
</dbReference>
<dbReference type="SUPFAM" id="SSF47459">
    <property type="entry name" value="HLH, helix-loop-helix DNA-binding domain"/>
    <property type="match status" value="1"/>
</dbReference>
<dbReference type="PROSITE" id="PS50888">
    <property type="entry name" value="BHLH"/>
    <property type="match status" value="1"/>
</dbReference>
<reference key="1">
    <citation type="journal article" date="2002" name="Nature">
        <title>The genome sequence of Schizosaccharomyces pombe.</title>
        <authorList>
            <person name="Wood V."/>
            <person name="Gwilliam R."/>
            <person name="Rajandream M.A."/>
            <person name="Lyne M.H."/>
            <person name="Lyne R."/>
            <person name="Stewart A."/>
            <person name="Sgouros J.G."/>
            <person name="Peat N."/>
            <person name="Hayles J."/>
            <person name="Baker S.G."/>
            <person name="Basham D."/>
            <person name="Bowman S."/>
            <person name="Brooks K."/>
            <person name="Brown D."/>
            <person name="Brown S."/>
            <person name="Chillingworth T."/>
            <person name="Churcher C.M."/>
            <person name="Collins M."/>
            <person name="Connor R."/>
            <person name="Cronin A."/>
            <person name="Davis P."/>
            <person name="Feltwell T."/>
            <person name="Fraser A."/>
            <person name="Gentles S."/>
            <person name="Goble A."/>
            <person name="Hamlin N."/>
            <person name="Harris D.E."/>
            <person name="Hidalgo J."/>
            <person name="Hodgson G."/>
            <person name="Holroyd S."/>
            <person name="Hornsby T."/>
            <person name="Howarth S."/>
            <person name="Huckle E.J."/>
            <person name="Hunt S."/>
            <person name="Jagels K."/>
            <person name="James K.D."/>
            <person name="Jones L."/>
            <person name="Jones M."/>
            <person name="Leather S."/>
            <person name="McDonald S."/>
            <person name="McLean J."/>
            <person name="Mooney P."/>
            <person name="Moule S."/>
            <person name="Mungall K.L."/>
            <person name="Murphy L.D."/>
            <person name="Niblett D."/>
            <person name="Odell C."/>
            <person name="Oliver K."/>
            <person name="O'Neil S."/>
            <person name="Pearson D."/>
            <person name="Quail M.A."/>
            <person name="Rabbinowitsch E."/>
            <person name="Rutherford K.M."/>
            <person name="Rutter S."/>
            <person name="Saunders D."/>
            <person name="Seeger K."/>
            <person name="Sharp S."/>
            <person name="Skelton J."/>
            <person name="Simmonds M.N."/>
            <person name="Squares R."/>
            <person name="Squares S."/>
            <person name="Stevens K."/>
            <person name="Taylor K."/>
            <person name="Taylor R.G."/>
            <person name="Tivey A."/>
            <person name="Walsh S.V."/>
            <person name="Warren T."/>
            <person name="Whitehead S."/>
            <person name="Woodward J.R."/>
            <person name="Volckaert G."/>
            <person name="Aert R."/>
            <person name="Robben J."/>
            <person name="Grymonprez B."/>
            <person name="Weltjens I."/>
            <person name="Vanstreels E."/>
            <person name="Rieger M."/>
            <person name="Schaefer M."/>
            <person name="Mueller-Auer S."/>
            <person name="Gabel C."/>
            <person name="Fuchs M."/>
            <person name="Duesterhoeft A."/>
            <person name="Fritzc C."/>
            <person name="Holzer E."/>
            <person name="Moestl D."/>
            <person name="Hilbert H."/>
            <person name="Borzym K."/>
            <person name="Langer I."/>
            <person name="Beck A."/>
            <person name="Lehrach H."/>
            <person name="Reinhardt R."/>
            <person name="Pohl T.M."/>
            <person name="Eger P."/>
            <person name="Zimmermann W."/>
            <person name="Wedler H."/>
            <person name="Wambutt R."/>
            <person name="Purnelle B."/>
            <person name="Goffeau A."/>
            <person name="Cadieu E."/>
            <person name="Dreano S."/>
            <person name="Gloux S."/>
            <person name="Lelaure V."/>
            <person name="Mottier S."/>
            <person name="Galibert F."/>
            <person name="Aves S.J."/>
            <person name="Xiang Z."/>
            <person name="Hunt C."/>
            <person name="Moore K."/>
            <person name="Hurst S.M."/>
            <person name="Lucas M."/>
            <person name="Rochet M."/>
            <person name="Gaillardin C."/>
            <person name="Tallada V.A."/>
            <person name="Garzon A."/>
            <person name="Thode G."/>
            <person name="Daga R.R."/>
            <person name="Cruzado L."/>
            <person name="Jimenez J."/>
            <person name="Sanchez M."/>
            <person name="del Rey F."/>
            <person name="Benito J."/>
            <person name="Dominguez A."/>
            <person name="Revuelta J.L."/>
            <person name="Moreno S."/>
            <person name="Armstrong J."/>
            <person name="Forsburg S.L."/>
            <person name="Cerutti L."/>
            <person name="Lowe T."/>
            <person name="McCombie W.R."/>
            <person name="Paulsen I."/>
            <person name="Potashkin J."/>
            <person name="Shpakovski G.V."/>
            <person name="Ussery D."/>
            <person name="Barrell B.G."/>
            <person name="Nurse P."/>
        </authorList>
    </citation>
    <scope>NUCLEOTIDE SEQUENCE [LARGE SCALE GENOMIC DNA]</scope>
    <source>
        <strain>972 / ATCC 24843</strain>
    </source>
</reference>
<gene>
    <name type="ORF">SPAC3F10.12c</name>
</gene>
<comment type="subcellular location">
    <subcellularLocation>
        <location evidence="1">Nucleus</location>
    </subcellularLocation>
</comment>
<proteinExistence type="inferred from homology"/>
<sequence>MQRDMSINHLLPPLSGPGQVEQLTGFTNDIVYNDFYAHAVSYNPYPSEKIDFPKKNTAHKNSTTSTVASSGNTTMEKPCVGSEEWYKAKRLSHKEVERRRREAISEGIKELANIVPGCEKNKGSILQRTAQYIRSLKEMEEMCREKSNLEKLVADHTIQELARENARLKSECERAWRSVELWKQAARSFDSELDVEENSES</sequence>
<keyword id="KW-0238">DNA-binding</keyword>
<keyword id="KW-0539">Nucleus</keyword>
<keyword id="KW-1185">Reference proteome</keyword>
<evidence type="ECO:0000255" key="1">
    <source>
        <dbReference type="PROSITE-ProRule" id="PRU00981"/>
    </source>
</evidence>
<evidence type="ECO:0000256" key="2">
    <source>
        <dbReference type="SAM" id="MobiDB-lite"/>
    </source>
</evidence>
<organism>
    <name type="scientific">Schizosaccharomyces pombe (strain 972 / ATCC 24843)</name>
    <name type="common">Fission yeast</name>
    <dbReference type="NCBI Taxonomy" id="284812"/>
    <lineage>
        <taxon>Eukaryota</taxon>
        <taxon>Fungi</taxon>
        <taxon>Dikarya</taxon>
        <taxon>Ascomycota</taxon>
        <taxon>Taphrinomycotina</taxon>
        <taxon>Schizosaccharomycetes</taxon>
        <taxon>Schizosaccharomycetales</taxon>
        <taxon>Schizosaccharomycetaceae</taxon>
        <taxon>Schizosaccharomyces</taxon>
    </lineage>
</organism>
<accession>Q10186</accession>
<protein>
    <recommendedName>
        <fullName>Uncharacterized bHLH domain-containing protein C3F10.12c</fullName>
    </recommendedName>
</protein>
<feature type="chain" id="PRO_0000127507" description="Uncharacterized bHLH domain-containing protein C3F10.12c">
    <location>
        <begin position="1"/>
        <end position="201"/>
    </location>
</feature>
<feature type="domain" description="bHLH" evidence="1">
    <location>
        <begin position="88"/>
        <end position="136"/>
    </location>
</feature>
<feature type="region of interest" description="Disordered" evidence="2">
    <location>
        <begin position="53"/>
        <end position="74"/>
    </location>
</feature>
<feature type="compositionally biased region" description="Polar residues" evidence="2">
    <location>
        <begin position="59"/>
        <end position="74"/>
    </location>
</feature>